<organism>
    <name type="scientific">Vibrio vulnificus (strain YJ016)</name>
    <dbReference type="NCBI Taxonomy" id="196600"/>
    <lineage>
        <taxon>Bacteria</taxon>
        <taxon>Pseudomonadati</taxon>
        <taxon>Pseudomonadota</taxon>
        <taxon>Gammaproteobacteria</taxon>
        <taxon>Vibrionales</taxon>
        <taxon>Vibrionaceae</taxon>
        <taxon>Vibrio</taxon>
    </lineage>
</organism>
<name>TSAC_VIBVY</name>
<protein>
    <recommendedName>
        <fullName evidence="1">Threonylcarbamoyl-AMP synthase</fullName>
        <shortName evidence="1">TC-AMP synthase</shortName>
        <ecNumber evidence="1">2.7.7.87</ecNumber>
    </recommendedName>
    <alternativeName>
        <fullName evidence="1">L-threonylcarbamoyladenylate synthase</fullName>
    </alternativeName>
    <alternativeName>
        <fullName evidence="1">t(6)A37 threonylcarbamoyladenosine biosynthesis protein TsaC</fullName>
    </alternativeName>
    <alternativeName>
        <fullName evidence="1">tRNA threonylcarbamoyladenosine biosynthesis protein TsaC</fullName>
    </alternativeName>
</protein>
<evidence type="ECO:0000255" key="1">
    <source>
        <dbReference type="HAMAP-Rule" id="MF_01852"/>
    </source>
</evidence>
<evidence type="ECO:0000305" key="2"/>
<sequence length="186" mass="20481">MVSNLQQVVKALKQGQVVAYPTEGVFGLGCDPDNEVAIERLLTIKQRPSDKGLILIAADFQQLQPYLDLTSLSAEQLQRVFATWPGPYTWVMPASARASALVTGYRQTVAVRVSDHPLVQKLCSEYGKPLTSTSANLSGQTECKTVEQVQDQLGSQISVILFGEIGERHRPSEIRDARTEQLLRQG</sequence>
<keyword id="KW-0067">ATP-binding</keyword>
<keyword id="KW-0963">Cytoplasm</keyword>
<keyword id="KW-0547">Nucleotide-binding</keyword>
<keyword id="KW-0548">Nucleotidyltransferase</keyword>
<keyword id="KW-0808">Transferase</keyword>
<keyword id="KW-0819">tRNA processing</keyword>
<dbReference type="EC" id="2.7.7.87" evidence="1"/>
<dbReference type="EMBL" id="BA000037">
    <property type="protein sequence ID" value="BAC95981.1"/>
    <property type="status" value="ALT_INIT"/>
    <property type="molecule type" value="Genomic_DNA"/>
</dbReference>
<dbReference type="SMR" id="Q7MGL3"/>
<dbReference type="STRING" id="672.VV93_v1c29400"/>
<dbReference type="KEGG" id="vvy:VV3217"/>
<dbReference type="eggNOG" id="COG0009">
    <property type="taxonomic scope" value="Bacteria"/>
</dbReference>
<dbReference type="HOGENOM" id="CLU_031397_6_0_6"/>
<dbReference type="Proteomes" id="UP000002675">
    <property type="component" value="Chromosome I"/>
</dbReference>
<dbReference type="GO" id="GO:0005737">
    <property type="term" value="C:cytoplasm"/>
    <property type="evidence" value="ECO:0007669"/>
    <property type="project" value="UniProtKB-SubCell"/>
</dbReference>
<dbReference type="GO" id="GO:0005524">
    <property type="term" value="F:ATP binding"/>
    <property type="evidence" value="ECO:0007669"/>
    <property type="project" value="UniProtKB-UniRule"/>
</dbReference>
<dbReference type="GO" id="GO:0003725">
    <property type="term" value="F:double-stranded RNA binding"/>
    <property type="evidence" value="ECO:0007669"/>
    <property type="project" value="InterPro"/>
</dbReference>
<dbReference type="GO" id="GO:0061710">
    <property type="term" value="F:L-threonylcarbamoyladenylate synthase"/>
    <property type="evidence" value="ECO:0007669"/>
    <property type="project" value="UniProtKB-EC"/>
</dbReference>
<dbReference type="GO" id="GO:0000049">
    <property type="term" value="F:tRNA binding"/>
    <property type="evidence" value="ECO:0007669"/>
    <property type="project" value="TreeGrafter"/>
</dbReference>
<dbReference type="GO" id="GO:0006450">
    <property type="term" value="P:regulation of translational fidelity"/>
    <property type="evidence" value="ECO:0007669"/>
    <property type="project" value="TreeGrafter"/>
</dbReference>
<dbReference type="GO" id="GO:0002949">
    <property type="term" value="P:tRNA threonylcarbamoyladenosine modification"/>
    <property type="evidence" value="ECO:0007669"/>
    <property type="project" value="UniProtKB-UniRule"/>
</dbReference>
<dbReference type="FunFam" id="3.90.870.10:FF:000004">
    <property type="entry name" value="Threonylcarbamoyl-AMP synthase"/>
    <property type="match status" value="1"/>
</dbReference>
<dbReference type="Gene3D" id="3.90.870.10">
    <property type="entry name" value="DHBP synthase"/>
    <property type="match status" value="1"/>
</dbReference>
<dbReference type="HAMAP" id="MF_01852">
    <property type="entry name" value="TsaC"/>
    <property type="match status" value="1"/>
</dbReference>
<dbReference type="InterPro" id="IPR017945">
    <property type="entry name" value="DHBP_synth_RibB-like_a/b_dom"/>
</dbReference>
<dbReference type="InterPro" id="IPR006070">
    <property type="entry name" value="Sua5-like_dom"/>
</dbReference>
<dbReference type="InterPro" id="IPR023535">
    <property type="entry name" value="TC-AMP_synthase"/>
</dbReference>
<dbReference type="InterPro" id="IPR050156">
    <property type="entry name" value="TC-AMP_synthase_SUA5"/>
</dbReference>
<dbReference type="NCBIfam" id="TIGR00057">
    <property type="entry name" value="L-threonylcarbamoyladenylate synthase"/>
    <property type="match status" value="1"/>
</dbReference>
<dbReference type="PANTHER" id="PTHR17490">
    <property type="entry name" value="SUA5"/>
    <property type="match status" value="1"/>
</dbReference>
<dbReference type="PANTHER" id="PTHR17490:SF18">
    <property type="entry name" value="THREONYLCARBAMOYL-AMP SYNTHASE"/>
    <property type="match status" value="1"/>
</dbReference>
<dbReference type="Pfam" id="PF01300">
    <property type="entry name" value="Sua5_yciO_yrdC"/>
    <property type="match status" value="1"/>
</dbReference>
<dbReference type="SUPFAM" id="SSF55821">
    <property type="entry name" value="YrdC/RibB"/>
    <property type="match status" value="1"/>
</dbReference>
<dbReference type="PROSITE" id="PS51163">
    <property type="entry name" value="YRDC"/>
    <property type="match status" value="1"/>
</dbReference>
<accession>Q7MGL3</accession>
<reference key="1">
    <citation type="journal article" date="2003" name="Genome Res.">
        <title>Comparative genome analysis of Vibrio vulnificus, a marine pathogen.</title>
        <authorList>
            <person name="Chen C.-Y."/>
            <person name="Wu K.-M."/>
            <person name="Chang Y.-C."/>
            <person name="Chang C.-H."/>
            <person name="Tsai H.-C."/>
            <person name="Liao T.-L."/>
            <person name="Liu Y.-M."/>
            <person name="Chen H.-J."/>
            <person name="Shen A.B.-T."/>
            <person name="Li J.-C."/>
            <person name="Su T.-L."/>
            <person name="Shao C.-P."/>
            <person name="Lee C.-T."/>
            <person name="Hor L.-I."/>
            <person name="Tsai S.-F."/>
        </authorList>
    </citation>
    <scope>NUCLEOTIDE SEQUENCE [LARGE SCALE GENOMIC DNA]</scope>
    <source>
        <strain>YJ016</strain>
    </source>
</reference>
<comment type="function">
    <text evidence="1">Required for the formation of a threonylcarbamoyl group on adenosine at position 37 (t(6)A37) in tRNAs that read codons beginning with adenine. Catalyzes the conversion of L-threonine, HCO(3)(-)/CO(2) and ATP to give threonylcarbamoyl-AMP (TC-AMP) as the acyladenylate intermediate, with the release of diphosphate.</text>
</comment>
<comment type="catalytic activity">
    <reaction evidence="1">
        <text>L-threonine + hydrogencarbonate + ATP = L-threonylcarbamoyladenylate + diphosphate + H2O</text>
        <dbReference type="Rhea" id="RHEA:36407"/>
        <dbReference type="ChEBI" id="CHEBI:15377"/>
        <dbReference type="ChEBI" id="CHEBI:17544"/>
        <dbReference type="ChEBI" id="CHEBI:30616"/>
        <dbReference type="ChEBI" id="CHEBI:33019"/>
        <dbReference type="ChEBI" id="CHEBI:57926"/>
        <dbReference type="ChEBI" id="CHEBI:73682"/>
        <dbReference type="EC" id="2.7.7.87"/>
    </reaction>
</comment>
<comment type="subcellular location">
    <subcellularLocation>
        <location evidence="1">Cytoplasm</location>
    </subcellularLocation>
</comment>
<comment type="similarity">
    <text evidence="1">Belongs to the SUA5 family. TsaC subfamily.</text>
</comment>
<comment type="sequence caution" evidence="2">
    <conflict type="erroneous initiation">
        <sequence resource="EMBL-CDS" id="BAC95981"/>
    </conflict>
</comment>
<gene>
    <name evidence="1" type="primary">tsaC</name>
    <name type="synonym">rimN</name>
    <name type="ordered locus">VV3217</name>
</gene>
<feature type="chain" id="PRO_0000353007" description="Threonylcarbamoyl-AMP synthase">
    <location>
        <begin position="1"/>
        <end position="186"/>
    </location>
</feature>
<feature type="domain" description="YrdC-like" evidence="1">
    <location>
        <begin position="2"/>
        <end position="186"/>
    </location>
</feature>
<proteinExistence type="inferred from homology"/>